<dbReference type="EC" id="1.2.1.8"/>
<dbReference type="EMBL" id="AB096083">
    <property type="protein sequence ID" value="BAC76608.1"/>
    <property type="molecule type" value="mRNA"/>
</dbReference>
<dbReference type="EMBL" id="DQ910546">
    <property type="protein sequence ID" value="ABI84118.1"/>
    <property type="molecule type" value="mRNA"/>
</dbReference>
<dbReference type="EMBL" id="AP004463">
    <property type="protein sequence ID" value="BAC98555.1"/>
    <property type="molecule type" value="Genomic_DNA"/>
</dbReference>
<dbReference type="EMBL" id="AP005537">
    <property type="protein sequence ID" value="BAC99806.1"/>
    <property type="molecule type" value="Genomic_DNA"/>
</dbReference>
<dbReference type="EMBL" id="AP008214">
    <property type="protein sequence ID" value="BAF23747.1"/>
    <property type="molecule type" value="Genomic_DNA"/>
</dbReference>
<dbReference type="EMBL" id="AP014964">
    <property type="protein sequence ID" value="BAT05490.1"/>
    <property type="molecule type" value="Genomic_DNA"/>
</dbReference>
<dbReference type="EMBL" id="CM000145">
    <property type="protein sequence ID" value="EEE68710.1"/>
    <property type="molecule type" value="Genomic_DNA"/>
</dbReference>
<dbReference type="RefSeq" id="XP_015650889.1">
    <property type="nucleotide sequence ID" value="XM_015795403.1"/>
</dbReference>
<dbReference type="SMR" id="Q84LK3"/>
<dbReference type="FunCoup" id="Q84LK3">
    <property type="interactions" value="529"/>
</dbReference>
<dbReference type="STRING" id="39947.Q84LK3"/>
<dbReference type="PaxDb" id="39947-Q84LK3"/>
<dbReference type="EnsemblPlants" id="Os08t0424500-01">
    <property type="protein sequence ID" value="Os08t0424500-01"/>
    <property type="gene ID" value="Os08g0424500"/>
</dbReference>
<dbReference type="Gramene" id="Os08t0424500-01">
    <property type="protein sequence ID" value="Os08t0424500-01"/>
    <property type="gene ID" value="Os08g0424500"/>
</dbReference>
<dbReference type="KEGG" id="dosa:Os08g0424500"/>
<dbReference type="eggNOG" id="KOG2450">
    <property type="taxonomic scope" value="Eukaryota"/>
</dbReference>
<dbReference type="HOGENOM" id="CLU_005391_0_1_1"/>
<dbReference type="InParanoid" id="Q84LK3"/>
<dbReference type="OMA" id="PMPIAAW"/>
<dbReference type="OrthoDB" id="310895at2759"/>
<dbReference type="BRENDA" id="1.2.1.8">
    <property type="organism ID" value="4460"/>
</dbReference>
<dbReference type="PlantReactome" id="R-OSA-1119579">
    <property type="pathway name" value="Glycine betaine biosynthesis III"/>
</dbReference>
<dbReference type="UniPathway" id="UPA00529">
    <property type="reaction ID" value="UER00386"/>
</dbReference>
<dbReference type="Proteomes" id="UP000000763">
    <property type="component" value="Chromosome 8"/>
</dbReference>
<dbReference type="Proteomes" id="UP000007752">
    <property type="component" value="Chromosome 8"/>
</dbReference>
<dbReference type="Proteomes" id="UP000059680">
    <property type="component" value="Chromosome 8"/>
</dbReference>
<dbReference type="ExpressionAtlas" id="Q84LK3">
    <property type="expression patterns" value="baseline and differential"/>
</dbReference>
<dbReference type="GO" id="GO:0005737">
    <property type="term" value="C:cytoplasm"/>
    <property type="evidence" value="ECO:0000314"/>
    <property type="project" value="UniProtKB"/>
</dbReference>
<dbReference type="GO" id="GO:0005777">
    <property type="term" value="C:peroxisome"/>
    <property type="evidence" value="ECO:0000250"/>
    <property type="project" value="UniProtKB"/>
</dbReference>
<dbReference type="GO" id="GO:0008802">
    <property type="term" value="F:betaine-aldehyde dehydrogenase (NAD+) activity"/>
    <property type="evidence" value="ECO:0000314"/>
    <property type="project" value="UniProtKB"/>
</dbReference>
<dbReference type="GO" id="GO:0071454">
    <property type="term" value="P:cellular response to anoxia"/>
    <property type="evidence" value="ECO:0000314"/>
    <property type="project" value="UniProtKB"/>
</dbReference>
<dbReference type="GO" id="GO:0019285">
    <property type="term" value="P:glycine betaine biosynthetic process from choline"/>
    <property type="evidence" value="ECO:0007669"/>
    <property type="project" value="UniProtKB-UniPathway"/>
</dbReference>
<dbReference type="CDD" id="cd07110">
    <property type="entry name" value="ALDH_F10_BADH"/>
    <property type="match status" value="1"/>
</dbReference>
<dbReference type="FunFam" id="3.40.309.10:FF:000012">
    <property type="entry name" value="Betaine aldehyde dehydrogenase"/>
    <property type="match status" value="1"/>
</dbReference>
<dbReference type="FunFam" id="3.40.605.10:FF:000007">
    <property type="entry name" value="NAD/NADP-dependent betaine aldehyde dehydrogenase"/>
    <property type="match status" value="1"/>
</dbReference>
<dbReference type="Gene3D" id="3.40.605.10">
    <property type="entry name" value="Aldehyde Dehydrogenase, Chain A, domain 1"/>
    <property type="match status" value="1"/>
</dbReference>
<dbReference type="Gene3D" id="3.40.309.10">
    <property type="entry name" value="Aldehyde Dehydrogenase, Chain A, domain 2"/>
    <property type="match status" value="1"/>
</dbReference>
<dbReference type="InterPro" id="IPR016161">
    <property type="entry name" value="Ald_DH/histidinol_DH"/>
</dbReference>
<dbReference type="InterPro" id="IPR016163">
    <property type="entry name" value="Ald_DH_C"/>
</dbReference>
<dbReference type="InterPro" id="IPR016160">
    <property type="entry name" value="Ald_DH_CS_CYS"/>
</dbReference>
<dbReference type="InterPro" id="IPR029510">
    <property type="entry name" value="Ald_DH_CS_GLU"/>
</dbReference>
<dbReference type="InterPro" id="IPR016162">
    <property type="entry name" value="Ald_DH_N"/>
</dbReference>
<dbReference type="InterPro" id="IPR015590">
    <property type="entry name" value="Aldehyde_DH_dom"/>
</dbReference>
<dbReference type="PANTHER" id="PTHR43860">
    <property type="entry name" value="BETAINE ALDEHYDE DEHYDROGENASE"/>
    <property type="match status" value="1"/>
</dbReference>
<dbReference type="PANTHER" id="PTHR43860:SF2">
    <property type="entry name" value="BETAINE ALDEHYDE DEHYDROGENASE-RELATED"/>
    <property type="match status" value="1"/>
</dbReference>
<dbReference type="Pfam" id="PF00171">
    <property type="entry name" value="Aldedh"/>
    <property type="match status" value="1"/>
</dbReference>
<dbReference type="SUPFAM" id="SSF53720">
    <property type="entry name" value="ALDH-like"/>
    <property type="match status" value="1"/>
</dbReference>
<dbReference type="PROSITE" id="PS00070">
    <property type="entry name" value="ALDEHYDE_DEHYDR_CYS"/>
    <property type="match status" value="1"/>
</dbReference>
<dbReference type="PROSITE" id="PS00687">
    <property type="entry name" value="ALDEHYDE_DEHYDR_GLU"/>
    <property type="match status" value="1"/>
</dbReference>
<name>BADH2_ORYSJ</name>
<evidence type="ECO:0000250" key="1"/>
<evidence type="ECO:0000255" key="2"/>
<evidence type="ECO:0000269" key="3">
    <source>
    </source>
</evidence>
<evidence type="ECO:0000269" key="4">
    <source>
    </source>
</evidence>
<evidence type="ECO:0000269" key="5">
    <source>
    </source>
</evidence>
<evidence type="ECO:0000269" key="6">
    <source>
    </source>
</evidence>
<evidence type="ECO:0000269" key="7">
    <source>
    </source>
</evidence>
<evidence type="ECO:0000269" key="8">
    <source>
    </source>
</evidence>
<evidence type="ECO:0000305" key="9"/>
<evidence type="ECO:0000305" key="10">
    <source>
    </source>
</evidence>
<evidence type="ECO:0000305" key="11">
    <source>
    </source>
</evidence>
<evidence type="ECO:0000305" key="12">
    <source>
    </source>
</evidence>
<evidence type="ECO:0000305" key="13">
    <source>
    </source>
</evidence>
<evidence type="ECO:0000305" key="14">
    <source>
    </source>
</evidence>
<reference key="1">
    <citation type="submission" date="2002-11" db="EMBL/GenBank/DDBJ databases">
        <title>putative betaine-aldehyde dehydrogenase gene in rice.</title>
        <authorList>
            <person name="Asayama M."/>
        </authorList>
    </citation>
    <scope>NUCLEOTIDE SEQUENCE [MRNA]</scope>
    <source>
        <strain>cv. Nipponbare</strain>
    </source>
</reference>
<reference key="2">
    <citation type="submission" date="2006-08" db="EMBL/GenBank/DDBJ databases">
        <title>Molecular cloning and expression analysis of a putative betaine-aldehyde dehydrogenase gene in rice.</title>
        <authorList>
            <person name="Pan L.J."/>
            <person name="Zhang H.S."/>
        </authorList>
    </citation>
    <scope>NUCLEOTIDE SEQUENCE [MRNA]</scope>
    <source>
        <strain>cv. Jiu Caiqing</strain>
        <tissue>Seedling</tissue>
    </source>
</reference>
<reference key="3">
    <citation type="journal article" date="2005" name="Nature">
        <title>The map-based sequence of the rice genome.</title>
        <authorList>
            <consortium name="International rice genome sequencing project (IRGSP)"/>
        </authorList>
    </citation>
    <scope>NUCLEOTIDE SEQUENCE [LARGE SCALE GENOMIC DNA]</scope>
    <source>
        <strain>cv. Nipponbare</strain>
    </source>
</reference>
<reference key="4">
    <citation type="journal article" date="2008" name="Nucleic Acids Res.">
        <title>The rice annotation project database (RAP-DB): 2008 update.</title>
        <authorList>
            <consortium name="The rice annotation project (RAP)"/>
        </authorList>
    </citation>
    <scope>GENOME REANNOTATION</scope>
    <source>
        <strain>cv. Nipponbare</strain>
    </source>
</reference>
<reference key="5">
    <citation type="journal article" date="2013" name="Rice">
        <title>Improvement of the Oryza sativa Nipponbare reference genome using next generation sequence and optical map data.</title>
        <authorList>
            <person name="Kawahara Y."/>
            <person name="de la Bastide M."/>
            <person name="Hamilton J.P."/>
            <person name="Kanamori H."/>
            <person name="McCombie W.R."/>
            <person name="Ouyang S."/>
            <person name="Schwartz D.C."/>
            <person name="Tanaka T."/>
            <person name="Wu J."/>
            <person name="Zhou S."/>
            <person name="Childs K.L."/>
            <person name="Davidson R.M."/>
            <person name="Lin H."/>
            <person name="Quesada-Ocampo L."/>
            <person name="Vaillancourt B."/>
            <person name="Sakai H."/>
            <person name="Lee S.S."/>
            <person name="Kim J."/>
            <person name="Numa H."/>
            <person name="Itoh T."/>
            <person name="Buell C.R."/>
            <person name="Matsumoto T."/>
        </authorList>
    </citation>
    <scope>GENOME REANNOTATION</scope>
    <source>
        <strain>cv. Nipponbare</strain>
    </source>
</reference>
<reference key="6">
    <citation type="journal article" date="2005" name="PLoS Biol.">
        <title>The genomes of Oryza sativa: a history of duplications.</title>
        <authorList>
            <person name="Yu J."/>
            <person name="Wang J."/>
            <person name="Lin W."/>
            <person name="Li S."/>
            <person name="Li H."/>
            <person name="Zhou J."/>
            <person name="Ni P."/>
            <person name="Dong W."/>
            <person name="Hu S."/>
            <person name="Zeng C."/>
            <person name="Zhang J."/>
            <person name="Zhang Y."/>
            <person name="Li R."/>
            <person name="Xu Z."/>
            <person name="Li S."/>
            <person name="Li X."/>
            <person name="Zheng H."/>
            <person name="Cong L."/>
            <person name="Lin L."/>
            <person name="Yin J."/>
            <person name="Geng J."/>
            <person name="Li G."/>
            <person name="Shi J."/>
            <person name="Liu J."/>
            <person name="Lv H."/>
            <person name="Li J."/>
            <person name="Wang J."/>
            <person name="Deng Y."/>
            <person name="Ran L."/>
            <person name="Shi X."/>
            <person name="Wang X."/>
            <person name="Wu Q."/>
            <person name="Li C."/>
            <person name="Ren X."/>
            <person name="Wang J."/>
            <person name="Wang X."/>
            <person name="Li D."/>
            <person name="Liu D."/>
            <person name="Zhang X."/>
            <person name="Ji Z."/>
            <person name="Zhao W."/>
            <person name="Sun Y."/>
            <person name="Zhang Z."/>
            <person name="Bao J."/>
            <person name="Han Y."/>
            <person name="Dong L."/>
            <person name="Ji J."/>
            <person name="Chen P."/>
            <person name="Wu S."/>
            <person name="Liu J."/>
            <person name="Xiao Y."/>
            <person name="Bu D."/>
            <person name="Tan J."/>
            <person name="Yang L."/>
            <person name="Ye C."/>
            <person name="Zhang J."/>
            <person name="Xu J."/>
            <person name="Zhou Y."/>
            <person name="Yu Y."/>
            <person name="Zhang B."/>
            <person name="Zhuang S."/>
            <person name="Wei H."/>
            <person name="Liu B."/>
            <person name="Lei M."/>
            <person name="Yu H."/>
            <person name="Li Y."/>
            <person name="Xu H."/>
            <person name="Wei S."/>
            <person name="He X."/>
            <person name="Fang L."/>
            <person name="Zhang Z."/>
            <person name="Zhang Y."/>
            <person name="Huang X."/>
            <person name="Su Z."/>
            <person name="Tong W."/>
            <person name="Li J."/>
            <person name="Tong Z."/>
            <person name="Li S."/>
            <person name="Ye J."/>
            <person name="Wang L."/>
            <person name="Fang L."/>
            <person name="Lei T."/>
            <person name="Chen C.-S."/>
            <person name="Chen H.-C."/>
            <person name="Xu Z."/>
            <person name="Li H."/>
            <person name="Huang H."/>
            <person name="Zhang F."/>
            <person name="Xu H."/>
            <person name="Li N."/>
            <person name="Zhao C."/>
            <person name="Li S."/>
            <person name="Dong L."/>
            <person name="Huang Y."/>
            <person name="Li L."/>
            <person name="Xi Y."/>
            <person name="Qi Q."/>
            <person name="Li W."/>
            <person name="Zhang B."/>
            <person name="Hu W."/>
            <person name="Zhang Y."/>
            <person name="Tian X."/>
            <person name="Jiao Y."/>
            <person name="Liang X."/>
            <person name="Jin J."/>
            <person name="Gao L."/>
            <person name="Zheng W."/>
            <person name="Hao B."/>
            <person name="Liu S.-M."/>
            <person name="Wang W."/>
            <person name="Yuan L."/>
            <person name="Cao M."/>
            <person name="McDermott J."/>
            <person name="Samudrala R."/>
            <person name="Wang J."/>
            <person name="Wong G.K.-S."/>
            <person name="Yang H."/>
        </authorList>
    </citation>
    <scope>NUCLEOTIDE SEQUENCE [LARGE SCALE GENOMIC DNA]</scope>
    <source>
        <strain>cv. Nipponbare</strain>
    </source>
</reference>
<reference key="7">
    <citation type="journal article" date="2005" name="Plant Biotechnol. J.">
        <title>The gene for fragrance in rice.</title>
        <authorList>
            <person name="Bradbury L.M."/>
            <person name="Fitzgerald T.L."/>
            <person name="Henry R.J."/>
            <person name="Jin Q."/>
            <person name="Waters D.L."/>
        </authorList>
    </citation>
    <scope>IDENTIFICATION</scope>
    <scope>ROLE IN RICE FRAGRANCE</scope>
</reference>
<reference key="8">
    <citation type="journal article" date="2008" name="BMC Plant Biol.">
        <title>RNAi-directed downregulation of OsBADH2 results in aroma (2-acetyl-1-pyrroline) production in rice (Oryza sativa L.).</title>
        <authorList>
            <person name="Niu X."/>
            <person name="Tang W."/>
            <person name="Huang W."/>
            <person name="Ren G."/>
            <person name="Wang Q."/>
            <person name="Luo D."/>
            <person name="Xiao Y."/>
            <person name="Yang S."/>
            <person name="Wang F."/>
            <person name="Lu B.R."/>
            <person name="Gao F."/>
            <person name="Lu T."/>
            <person name="Liu Y."/>
        </authorList>
    </citation>
    <scope>DISRUPTION PHENOTYPE</scope>
    <scope>TISSUE SPECIFICITY</scope>
</reference>
<reference key="9">
    <citation type="journal article" date="2008" name="Plant Cell">
        <title>Badh2, encoding betaine aldehyde dehydrogenase, inhibits the biosynthesis of 2-acetyl-1-pyrroline, a major component in rice fragrance.</title>
        <authorList>
            <person name="Chen S."/>
            <person name="Yang Y."/>
            <person name="Shi W."/>
            <person name="Ji Q."/>
            <person name="He F."/>
            <person name="Zhang Z."/>
            <person name="Cheng Z."/>
            <person name="Liu X."/>
            <person name="Xu M."/>
        </authorList>
    </citation>
    <scope>FUNCTION</scope>
    <scope>DISRUPTION PHENOTYPE</scope>
    <scope>TISSUE SPECIFICITY</scope>
    <scope>SUBCELLULAR LOCATION</scope>
    <scope>ROLE IN RICE FRAGRANCE</scope>
</reference>
<reference key="10">
    <citation type="journal article" date="2008" name="Plant Mol. Biol.">
        <title>Inactivation of an aminoaldehyde dehydrogenase is responsible for fragrance in rice.</title>
        <authorList>
            <person name="Bradbury L.M."/>
            <person name="Gillies S.A."/>
            <person name="Brushett D.J."/>
            <person name="Waters D.L."/>
            <person name="Henry R.J."/>
        </authorList>
    </citation>
    <scope>FUNCTION</scope>
    <scope>BIOPHYSICOCHEMICAL PROPERTIES</scope>
    <scope>CATALYTIC ACTIVITY</scope>
</reference>
<reference key="11">
    <citation type="journal article" date="2008" name="Theor. Appl. Genet.">
        <title>Characterization of the major fragance gene from an aromatic japonica rice and analysis of its diversity in Asian cultivated rice.</title>
        <authorList>
            <person name="Bourgis F."/>
            <person name="Guyot R."/>
            <person name="Gherbi H."/>
            <person name="Tailliez E."/>
            <person name="Amabile I."/>
            <person name="Salse J."/>
            <person name="Lorieux M."/>
            <person name="Delseny M."/>
            <person name="Ghesquiere A."/>
        </authorList>
    </citation>
    <scope>FUNCTION</scope>
    <scope>ROLE IN RICE FRAGRANCE</scope>
</reference>
<reference key="12">
    <citation type="journal article" date="2009" name="Biotechnol. Adv.">
        <title>Genetic and molecular basis of fragrance in rice.</title>
        <authorList>
            <person name="Sakthivel K."/>
            <person name="Sundaram R.M."/>
            <person name="Shobha Rani N."/>
            <person name="Balachandran S.M."/>
            <person name="Neeraja C.N."/>
        </authorList>
    </citation>
    <scope>REVIEW ON RICE FRAGRANCE</scope>
</reference>
<reference key="13">
    <citation type="journal article" date="2009" name="FEBS Lett.">
        <title>OsBADH1 is possibly involved in acetaldehyde oxidation in rice plant peroxisomes.</title>
        <authorList>
            <person name="Mitsuya S."/>
            <person name="Yokota Y."/>
            <person name="Fujiwara T."/>
            <person name="Mori N."/>
            <person name="Takabe T."/>
        </authorList>
    </citation>
    <scope>FUNCTION</scope>
    <scope>INDUCTION BY SUBMERGENCE</scope>
    <scope>BIOPHYSICOCHEMICAL PROPERTIES</scope>
    <source>
        <strain>cv. Nipponbare</strain>
    </source>
</reference>
<reference key="14">
    <citation type="journal article" date="2009" name="Proc. Natl. Acad. Sci. U.S.A.">
        <title>The origin and evolution of fragrance in rice (Oryza sativa L.).</title>
        <authorList>
            <person name="Kovach M.J."/>
            <person name="Calingacion M.N."/>
            <person name="Fitzgerald M.A."/>
            <person name="McCouch S.R."/>
        </authorList>
    </citation>
    <scope>ROLE IN RICE FRAGRANCE</scope>
</reference>
<reference key="15">
    <citation type="journal article" date="2012" name="Biochimie">
        <title>Dissecting substrate specificity of two rice BADH isoforms: Enzyme kinetics, docking and molecular dynamics simulation studies.</title>
        <authorList>
            <person name="Jiamsomboon K."/>
            <person name="Treesuwan W."/>
            <person name="Boonyalai N."/>
        </authorList>
    </citation>
    <scope>FUNCTION</scope>
    <scope>MUTAGENESIS OF ASN-162 AND TRP-170</scope>
    <scope>BINDING OF BETAINE ALDEHYDE AND GAMMA-4-AMINOBUTYRALDEHYDE</scope>
    <scope>INTERACTION WITH NAD</scope>
    <scope>BIOPHYSICOCHEMICAL PROPERTIES</scope>
</reference>
<organism>
    <name type="scientific">Oryza sativa subsp. japonica</name>
    <name type="common">Rice</name>
    <dbReference type="NCBI Taxonomy" id="39947"/>
    <lineage>
        <taxon>Eukaryota</taxon>
        <taxon>Viridiplantae</taxon>
        <taxon>Streptophyta</taxon>
        <taxon>Embryophyta</taxon>
        <taxon>Tracheophyta</taxon>
        <taxon>Spermatophyta</taxon>
        <taxon>Magnoliopsida</taxon>
        <taxon>Liliopsida</taxon>
        <taxon>Poales</taxon>
        <taxon>Poaceae</taxon>
        <taxon>BOP clade</taxon>
        <taxon>Oryzoideae</taxon>
        <taxon>Oryzeae</taxon>
        <taxon>Oryzinae</taxon>
        <taxon>Oryza</taxon>
        <taxon>Oryza sativa</taxon>
    </lineage>
</organism>
<feature type="chain" id="PRO_0000430057" description="Betaine aldehyde dehydrogenase 2">
    <location>
        <begin position="1"/>
        <end position="503"/>
    </location>
</feature>
<feature type="short sequence motif" description="Microbody targeting signal" evidence="2">
    <location>
        <begin position="501"/>
        <end position="503"/>
    </location>
</feature>
<feature type="active site" evidence="1">
    <location>
        <position position="260"/>
    </location>
</feature>
<feature type="active site" evidence="1">
    <location>
        <position position="294"/>
    </location>
</feature>
<feature type="binding site" evidence="9">
    <location>
        <begin position="161"/>
        <end position="170"/>
    </location>
    <ligand>
        <name>betaine aldehyde</name>
        <dbReference type="ChEBI" id="CHEBI:15710"/>
    </ligand>
</feature>
<feature type="binding site" evidence="1">
    <location>
        <begin position="238"/>
        <end position="243"/>
    </location>
    <ligand>
        <name>NAD(+)</name>
        <dbReference type="ChEBI" id="CHEBI:57540"/>
    </ligand>
</feature>
<feature type="binding site" evidence="9">
    <location>
        <begin position="260"/>
        <end position="261"/>
    </location>
    <ligand>
        <name>4-aminobutanal</name>
        <dbReference type="ChEBI" id="CHEBI:58264"/>
    </ligand>
</feature>
<feature type="binding site" evidence="9">
    <location>
        <position position="260"/>
    </location>
    <ligand>
        <name>betaine aldehyde</name>
        <dbReference type="ChEBI" id="CHEBI:15710"/>
    </ligand>
</feature>
<feature type="binding site" evidence="9">
    <location>
        <begin position="292"/>
        <end position="295"/>
    </location>
    <ligand>
        <name>betaine aldehyde</name>
        <dbReference type="ChEBI" id="CHEBI:15710"/>
    </ligand>
</feature>
<feature type="binding site" evidence="9">
    <location>
        <position position="294"/>
    </location>
    <ligand>
        <name>4-aminobutanal</name>
        <dbReference type="ChEBI" id="CHEBI:58264"/>
    </ligand>
</feature>
<feature type="binding site" evidence="9">
    <location>
        <position position="453"/>
    </location>
    <ligand>
        <name>betaine aldehyde</name>
        <dbReference type="ChEBI" id="CHEBI:15710"/>
    </ligand>
</feature>
<feature type="binding site" evidence="9">
    <location>
        <position position="459"/>
    </location>
    <ligand>
        <name>4-aminobutanal</name>
        <dbReference type="ChEBI" id="CHEBI:58264"/>
    </ligand>
</feature>
<feature type="mutagenesis site" description="Slightly reduced affinity for NAD, 4-fold enhanced affinity for betaine aldehyde (Bet-ald), but 3-fold reduction in gamma-4-aminobutyraldehyde (GAB-ald) affinity and reduced catalytic efficiency (2-fold for Bet-ald and 8-fold for GAB-ald)." evidence="8">
    <original>N</original>
    <variation>A</variation>
    <location>
        <position position="162"/>
    </location>
</feature>
<feature type="mutagenesis site" description="Slightly reduced affinity for NAD, 4-fold enhanced affinity for betaine aldehyde (Bet-ald), but 2-fold reduction in gamma-4-aminobutyraldehyde (GAB-ald) affinity and reduced catalytic efficiency (2.5-fold for Bet-ald and 6-fold for GAB-ald)." evidence="8">
    <original>W</original>
    <variation>A</variation>
    <location>
        <position position="170"/>
    </location>
</feature>
<feature type="mutagenesis site" description="Slightly reduced affinity for NAD, 5-fold enhanced affinity for betaine aldehyde (Bet-ald), but 3-fold reduction in gamma-4-aminobutyraldehyde (GAB-ald) affinity and 1.5-fold increase in catalytic efficiency towards gamma-aminobutyraldehyde (GAB-ald)." evidence="8">
    <original>W</original>
    <variation>F</variation>
    <location>
        <position position="170"/>
    </location>
</feature>
<feature type="sequence conflict" description="In Ref. 2; ABI84118." evidence="9" ref="2">
    <original>F</original>
    <variation>L</variation>
    <location>
        <position position="143"/>
    </location>
</feature>
<feature type="sequence conflict" description="In Ref. 2; ABI84118." evidence="9" ref="2">
    <original>L</original>
    <variation>S</variation>
    <location>
        <position position="189"/>
    </location>
</feature>
<feature type="sequence conflict" description="In Ref. 2; ABI84118." evidence="9" ref="2">
    <original>R</original>
    <variation>M</variation>
    <location>
        <position position="332"/>
    </location>
</feature>
<gene>
    <name type="primary">BADH2</name>
    <name type="synonym">fgr</name>
    <name type="ordered locus">LOC_Os08g32870</name>
    <name type="ordered locus">Os08g0424500</name>
    <name type="ORF">OsJ_27367</name>
    <name type="ORF">OSJNBa0056L09.30</name>
    <name type="ORF">P0456B03.101</name>
</gene>
<accession>Q84LK3</accession>
<accession>A0A0N7KPV7</accession>
<accession>Q06DE4</accession>
<keyword id="KW-0963">Cytoplasm</keyword>
<keyword id="KW-0520">NAD</keyword>
<keyword id="KW-0560">Oxidoreductase</keyword>
<keyword id="KW-0576">Peroxisome</keyword>
<keyword id="KW-1185">Reference proteome</keyword>
<protein>
    <recommendedName>
        <fullName>Betaine aldehyde dehydrogenase 2</fullName>
        <shortName>OsBADH2</shortName>
        <ecNumber>1.2.1.8</ecNumber>
    </recommendedName>
</protein>
<proteinExistence type="evidence at protein level"/>
<sequence>MATAIPQRQLFVAGEWRAPALGRRLPVVNPATESPIGEIPAGTAEDVDAAVAAAREALKRNRGRDWARAPGAVRAKYLRAIAAKIIERKSELARLETLDCGKPLDEAAWDMDDVAGCFEYFADLAESLDKRQNAPVSLPMENFKCYLRKEPIGVVGLITPWNYPLLMATWKVAPALAAGCTAVLKPSELASVTCLELADVCKEVGLPSGVLNIVTGLGSEAGAPLSSHPGVDKVAFTGSYETGKKIMASAAPMVKPVSLELGGKSPIVVFDDVDVEKAVEWTLFGCFWTNGQICSATSRLILHKKIAKEFQERMVAWAKNIKVSDPLEEGCRLGPVVSEGQYEKIKQFVSTAKSQGATILTGGVRPKHLEKGFYIEPTIITDVDTSMQIWREEVFGPVLCVKEFSTEEEAIELANDTHYGLAGAVLSGDRERCQRLTEEIDAGIIWVNCSQPCFCQAPWGGNKRSGFGRELGEGGIDNYLSVKQVTEYASDEPWGWYKSPSKL</sequence>
<comment type="function">
    <text evidence="3 4 5 7 8">Dehydrogenase that can use N-acetyl-gamma-aminobutyraldehyde (NAGABald), gamma-guanidinobutyraldehyde (GGBald), betaine aldehyde (Bet-ald), gamma-aminobutyraldehyde (GAB-ald), acetaldehyde, 4-aminobutylaldehyde (AB-ald), 3-aminopropionaldehyde (AP-ald), 4-N-trimethylaminobutyraldehyde (TMAB-ald) and 3-N-trimethylaminopropionaldehyde (TMAP-ald) as substrates. Catalyzes the oxidation of GAB-ald more efficiently than Bet-ald. Mediates the conversion of GAB-ald into gamma-aminobutyric acid (GABA), and prevents the formation of 2-acetyl-1-pyrroline (2AP) which gives fragrant rice its aromatic properties.</text>
</comment>
<comment type="catalytic activity">
    <reaction evidence="5">
        <text>betaine aldehyde + NAD(+) + H2O = glycine betaine + NADH + 2 H(+)</text>
        <dbReference type="Rhea" id="RHEA:15305"/>
        <dbReference type="ChEBI" id="CHEBI:15377"/>
        <dbReference type="ChEBI" id="CHEBI:15378"/>
        <dbReference type="ChEBI" id="CHEBI:15710"/>
        <dbReference type="ChEBI" id="CHEBI:17750"/>
        <dbReference type="ChEBI" id="CHEBI:57540"/>
        <dbReference type="ChEBI" id="CHEBI:57945"/>
        <dbReference type="EC" id="1.2.1.8"/>
    </reaction>
</comment>
<comment type="biophysicochemical properties">
    <kinetics>
        <KM evidence="5">10 mM for N-acetyl-gamma-aminobutyraldehyde (NAGABald)</KM>
        <KM evidence="5">260 uM for gamma-guanidinobutyraldehyde (GGBald)</KM>
        <KM evidence="5">63 uM for betaine aldehyde</KM>
        <KM evidence="5">9 uM for gamma-aminobutyraldehyde</KM>
        <KM evidence="8">251 uM for betaine aldehyde (at 30 degrees Celsius)</KM>
        <KM evidence="8">38 uM for gamma-aminobutyraldehyde (at 30 degrees Celsius)</KM>
        <KM evidence="8">146 uM for acetaldehyde (at 30 degrees Celsius)</KM>
        <KM evidence="7">230 uM for betaine aldehyde</KM>
        <KM evidence="7">3.7 uM for 4-aminobutyraldehyde (AB-ald)</KM>
        <KM evidence="7">12 uM for 3-aminopropionaldehyde (AP-ald)</KM>
        <KM evidence="7">41 uM for 4-N-trimethylaminobutyraldehyde (TMAB-ald)</KM>
        <KM evidence="7">340 uM for 3-N-trimethylaminopropionaldehyde (TMAP-ald)</KM>
        <KM evidence="7">170 uM for acetaldehyde</KM>
        <Vmax evidence="7">0.048 umol/min/mg enzyme with acetaldehyde as substrate</Vmax>
    </kinetics>
    <phDependence>
        <text evidence="5 7 8">Optimum pH is 10.</text>
    </phDependence>
</comment>
<comment type="pathway">
    <text>Amine and polyamine biosynthesis; betaine biosynthesis via choline pathway; betaine from betaine aldehyde: step 1/1.</text>
</comment>
<comment type="subunit">
    <text evidence="1">Homodimer.</text>
</comment>
<comment type="subcellular location">
    <subcellularLocation>
        <location evidence="1">Peroxisome</location>
    </subcellularLocation>
    <subcellularLocation>
        <location evidence="4">Cytoplasm</location>
    </subcellularLocation>
</comment>
<comment type="tissue specificity">
    <text evidence="4 6">Expressed constitutively in roots, embryos, seedlings, stems, leaves and flowers, with higher levels in young leaves, and lower levels in roots. Strongly expressed in inflorescence meristem during cell division.</text>
</comment>
<comment type="induction">
    <text evidence="7">Following submergence treatment, transient decreased levels that recovers after re-aeration.</text>
</comment>
<comment type="disruption phenotype">
    <text evidence="4 6">Reduced crop productivity, but increased accumulation of gamma-4-aminobutyraldehyde (GAB-ald) and higher 2-acetyl-1-pyrroline (2AP) biosynthesis, which influences aroma.</text>
</comment>
<comment type="miscellaneous">
    <text evidence="10 11 12 13 14">Present in a truncated form, mostly allele badh2.1, also called 'fgr' in fragrant rice varieties (e.g. basmati and jasmine rice). The loss of activity leads to accumulation of 2-acetyl-1-pyrroline (2AP) that confers the flavor of fragrant rice. Haplotype analysis suggests a single origin of the badh2.1 allele within the Japonica varietal group and demonstrates the introgression of this allele from Japonica to Indica (PubMed:17129318, PubMed:18491070, PubMed:18599581, PubMed:19371779, PubMed:19706531).</text>
</comment>
<comment type="similarity">
    <text evidence="9">Belongs to the aldehyde dehydrogenase family.</text>
</comment>